<feature type="chain" id="PRO_0000389998" description="NADH-quinone oxidoreductase subunit K">
    <location>
        <begin position="1"/>
        <end position="101"/>
    </location>
</feature>
<feature type="transmembrane region" description="Helical" evidence="1">
    <location>
        <begin position="4"/>
        <end position="24"/>
    </location>
</feature>
<feature type="transmembrane region" description="Helical" evidence="1">
    <location>
        <begin position="29"/>
        <end position="49"/>
    </location>
</feature>
<feature type="transmembrane region" description="Helical" evidence="1">
    <location>
        <begin position="61"/>
        <end position="81"/>
    </location>
</feature>
<accession>A3N7M7</accession>
<protein>
    <recommendedName>
        <fullName evidence="1">NADH-quinone oxidoreductase subunit K</fullName>
        <ecNumber evidence="1">7.1.1.-</ecNumber>
    </recommendedName>
    <alternativeName>
        <fullName evidence="1">NADH dehydrogenase I subunit K</fullName>
    </alternativeName>
    <alternativeName>
        <fullName evidence="1">NDH-1 subunit K</fullName>
    </alternativeName>
</protein>
<comment type="function">
    <text evidence="1">NDH-1 shuttles electrons from NADH, via FMN and iron-sulfur (Fe-S) centers, to quinones in the respiratory chain. The immediate electron acceptor for the enzyme in this species is believed to be ubiquinone. Couples the redox reaction to proton translocation (for every two electrons transferred, four hydrogen ions are translocated across the cytoplasmic membrane), and thus conserves the redox energy in a proton gradient.</text>
</comment>
<comment type="catalytic activity">
    <reaction evidence="1">
        <text>a quinone + NADH + 5 H(+)(in) = a quinol + NAD(+) + 4 H(+)(out)</text>
        <dbReference type="Rhea" id="RHEA:57888"/>
        <dbReference type="ChEBI" id="CHEBI:15378"/>
        <dbReference type="ChEBI" id="CHEBI:24646"/>
        <dbReference type="ChEBI" id="CHEBI:57540"/>
        <dbReference type="ChEBI" id="CHEBI:57945"/>
        <dbReference type="ChEBI" id="CHEBI:132124"/>
    </reaction>
</comment>
<comment type="subunit">
    <text evidence="1">NDH-1 is composed of 14 different subunits. Subunits NuoA, H, J, K, L, M, N constitute the membrane sector of the complex.</text>
</comment>
<comment type="subcellular location">
    <subcellularLocation>
        <location evidence="1">Cell inner membrane</location>
        <topology evidence="1">Multi-pass membrane protein</topology>
    </subcellularLocation>
</comment>
<comment type="similarity">
    <text evidence="1">Belongs to the complex I subunit 4L family.</text>
</comment>
<sequence>MLTLAHYLVLGAILFAIAIVGIFLNRRNIIIILMAIELMLLAVNTNFVAFSHYLGDVHGQIFVFFVLTVAAAEAAIGLAILVTLFRKLDTINVEDLDQLKG</sequence>
<keyword id="KW-0997">Cell inner membrane</keyword>
<keyword id="KW-1003">Cell membrane</keyword>
<keyword id="KW-0472">Membrane</keyword>
<keyword id="KW-0520">NAD</keyword>
<keyword id="KW-0874">Quinone</keyword>
<keyword id="KW-1278">Translocase</keyword>
<keyword id="KW-0812">Transmembrane</keyword>
<keyword id="KW-1133">Transmembrane helix</keyword>
<keyword id="KW-0813">Transport</keyword>
<keyword id="KW-0830">Ubiquinone</keyword>
<organism>
    <name type="scientific">Burkholderia pseudomallei (strain 668)</name>
    <dbReference type="NCBI Taxonomy" id="320373"/>
    <lineage>
        <taxon>Bacteria</taxon>
        <taxon>Pseudomonadati</taxon>
        <taxon>Pseudomonadota</taxon>
        <taxon>Betaproteobacteria</taxon>
        <taxon>Burkholderiales</taxon>
        <taxon>Burkholderiaceae</taxon>
        <taxon>Burkholderia</taxon>
        <taxon>pseudomallei group</taxon>
    </lineage>
</organism>
<evidence type="ECO:0000255" key="1">
    <source>
        <dbReference type="HAMAP-Rule" id="MF_01456"/>
    </source>
</evidence>
<name>NUOK_BURP6</name>
<dbReference type="EC" id="7.1.1.-" evidence="1"/>
<dbReference type="EMBL" id="CP000570">
    <property type="protein sequence ID" value="ABN82084.1"/>
    <property type="molecule type" value="Genomic_DNA"/>
</dbReference>
<dbReference type="RefSeq" id="WP_004185739.1">
    <property type="nucleotide sequence ID" value="NC_009074.1"/>
</dbReference>
<dbReference type="SMR" id="A3N7M7"/>
<dbReference type="GeneID" id="98107315"/>
<dbReference type="KEGG" id="bpd:BURPS668_1300"/>
<dbReference type="HOGENOM" id="CLU_144724_2_0_4"/>
<dbReference type="GO" id="GO:0030964">
    <property type="term" value="C:NADH dehydrogenase complex"/>
    <property type="evidence" value="ECO:0007669"/>
    <property type="project" value="TreeGrafter"/>
</dbReference>
<dbReference type="GO" id="GO:0005886">
    <property type="term" value="C:plasma membrane"/>
    <property type="evidence" value="ECO:0007669"/>
    <property type="project" value="UniProtKB-SubCell"/>
</dbReference>
<dbReference type="GO" id="GO:0050136">
    <property type="term" value="F:NADH:ubiquinone reductase (non-electrogenic) activity"/>
    <property type="evidence" value="ECO:0007669"/>
    <property type="project" value="UniProtKB-UniRule"/>
</dbReference>
<dbReference type="GO" id="GO:0048038">
    <property type="term" value="F:quinone binding"/>
    <property type="evidence" value="ECO:0007669"/>
    <property type="project" value="UniProtKB-KW"/>
</dbReference>
<dbReference type="GO" id="GO:0042773">
    <property type="term" value="P:ATP synthesis coupled electron transport"/>
    <property type="evidence" value="ECO:0007669"/>
    <property type="project" value="InterPro"/>
</dbReference>
<dbReference type="FunFam" id="1.10.287.3510:FF:000001">
    <property type="entry name" value="NADH-quinone oxidoreductase subunit K"/>
    <property type="match status" value="1"/>
</dbReference>
<dbReference type="Gene3D" id="1.10.287.3510">
    <property type="match status" value="1"/>
</dbReference>
<dbReference type="HAMAP" id="MF_01456">
    <property type="entry name" value="NDH1_NuoK"/>
    <property type="match status" value="1"/>
</dbReference>
<dbReference type="InterPro" id="IPR001133">
    <property type="entry name" value="NADH_UbQ_OxRdtase_chain4L/K"/>
</dbReference>
<dbReference type="InterPro" id="IPR039428">
    <property type="entry name" value="NUOK/Mnh_C1-like"/>
</dbReference>
<dbReference type="NCBIfam" id="NF004320">
    <property type="entry name" value="PRK05715.1-2"/>
    <property type="match status" value="1"/>
</dbReference>
<dbReference type="NCBIfam" id="NF004321">
    <property type="entry name" value="PRK05715.1-3"/>
    <property type="match status" value="1"/>
</dbReference>
<dbReference type="NCBIfam" id="NF004323">
    <property type="entry name" value="PRK05715.1-5"/>
    <property type="match status" value="1"/>
</dbReference>
<dbReference type="PANTHER" id="PTHR11434:SF21">
    <property type="entry name" value="NADH DEHYDROGENASE SUBUNIT 4L-RELATED"/>
    <property type="match status" value="1"/>
</dbReference>
<dbReference type="PANTHER" id="PTHR11434">
    <property type="entry name" value="NADH-UBIQUINONE OXIDOREDUCTASE SUBUNIT ND4L"/>
    <property type="match status" value="1"/>
</dbReference>
<dbReference type="Pfam" id="PF00420">
    <property type="entry name" value="Oxidored_q2"/>
    <property type="match status" value="1"/>
</dbReference>
<proteinExistence type="inferred from homology"/>
<gene>
    <name evidence="1" type="primary">nuoK</name>
    <name type="ordered locus">BURPS668_1300</name>
</gene>
<reference key="1">
    <citation type="journal article" date="2010" name="Genome Biol. Evol.">
        <title>Continuing evolution of Burkholderia mallei through genome reduction and large-scale rearrangements.</title>
        <authorList>
            <person name="Losada L."/>
            <person name="Ronning C.M."/>
            <person name="DeShazer D."/>
            <person name="Woods D."/>
            <person name="Fedorova N."/>
            <person name="Kim H.S."/>
            <person name="Shabalina S.A."/>
            <person name="Pearson T.R."/>
            <person name="Brinkac L."/>
            <person name="Tan P."/>
            <person name="Nandi T."/>
            <person name="Crabtree J."/>
            <person name="Badger J."/>
            <person name="Beckstrom-Sternberg S."/>
            <person name="Saqib M."/>
            <person name="Schutzer S.E."/>
            <person name="Keim P."/>
            <person name="Nierman W.C."/>
        </authorList>
    </citation>
    <scope>NUCLEOTIDE SEQUENCE [LARGE SCALE GENOMIC DNA]</scope>
    <source>
        <strain>668</strain>
    </source>
</reference>